<sequence>MIFQSFLLGNLVSLCMKIINSVVVVGLYYGFLTTFSIGPSYLFLLRARVMEEGTEKKVSATTGFITGQLMMFISIYYAPLHLALGRPHTITVLALPYLLFHFFWNNHKHFFDYGSTTRNLMRNLSIQCVFLNNLIFQLFNYFILPSSMLARLVNIYIFRCNNKMLFVTSSFVGWLIGHILFMKWLGLVLVWIRQNHSIRSNKYIRSNKYLVSELRIFMARIFSILLFITCVYYLGRIPSPILTKKLKETSKTEEGVESEEEGDVEIETTSEMKGTKQEQEGSTEEDPSSSLFSEEKEDSNKIDETEEIRVNGKEKTKDEFHFHFTETGYNNIPFYDYEDSYLNMNGNQENWKLKDKKAAKRKELFRFEKTLVTTLFDYNRWNHPFRYIKNDRFEKALRKEMSQYFFQIYESNGKQRISFTYLPSLATFGEMIKRKISLYTLEKSSSNEFDKRWVYTNKQKIKNLNNEFRNRIQALDKEFLFLDILEARTRLCNDDTKNEYFPKMYDPFLKGAYRGRIKTILSPSKTAIDNLRDTIGINRIHSILLPDINIDYQEFEQKANLFDKKQLLTEMGNFLPLAGEFDIEQKSNLNMKGLSLFSDQDQEKIDFEKERKIFKFLLNVIRTYPIDQKIQKESVGIKEIIKKVPRWSYKLITDLEQQSGEHQENVPVDHQIRSRKAKRVVIFTDNKENTDPNKDNDTSDQRNEVALIRYSQQSDFRRRIIKGSMRAQRRKIVIWELFQANVHSPLFLDRIKKSPRFSFDISVLIKLLFRNWTGKGAKFEILEYTDEETKKEDKKEKDKKEENKRKEQARIEIAEAWDTIPFAQVIRGSMLISQSFFRKYIRLPVLIIGKNIVRMILFQFPEWSEDLEGWNREMHIKCTYNGVQLSETEFPKNWLTDGIQIKILFPFCLKPWHRSKRRPSHRDLMKKKKQKDDFCFLTVWGMETELPFGSPRKQSSFFEPAVKELETKIIKFKRAYFLALKVLKRKTKLLLRVSKETKKWIIESFLFLKRLIKELSKLNPIILFRFREVYESNETKNEKDSIISNQIIHESFSKINSPNWTNSSLTEKKKKDMSHRTSTIRNQIERIIKEKKKITPTPRIYISPNKRNWNTKRLELPKNIWQILKKRNARLFSKFNSFIKIFVERIYIDIFLFIINITRLNTQLFIESIKKIMDKSINKANKERINKKNQNTIYFISTIKKSIDTINNKTNSYIFCDLSYLSQAYVFYKLSQTKVSNLYKLRSFFHYLGTSFFLKTEIKHSFEKQGIIQNELSLKKLPSYGMDQWKGWLKGHYQYDLPSIRWSKLISEKWRNRVNQHHMAQNQNFKLNSYEKGHYKKQKDSEVYSLLNQKENFQKNSRYDLLSYKYINYQKMRDPSIYESPFQVQVNKNQDFYYNSNTYKHNLFDMLESIPINPYLVKGNIRYMEKNTDRKYFDWKIIKFFLRKRVDIESWVKINTKSNQNTKIGTNNYQIIDKIDKKGPFYLLLPQNPKINSPSPKKLFLDWMGMNEEILNRPISSLEFWFFPEFVLLYNLYKMKPWVIPSKVLLFNLNLNENVISNNKNVDGKQKTECVIPSNKQIKNKNQNQKEKETPADQEDLRSDAQKQGNLGSVPPTKTKQEKDNEEDYAVSKIKAGKKKKQYKSKTEAELDFFLKRYLVFQLRWGDALNQRMINNVKIYCLLLRLINPRKITISSIQRREMSLDIMLIQKNLSLTELIKRGVLVIEPDRLSVKNDGQFIMYQILGISVVHKNKHQTNQGYREQTYVDKNRFDLLVPENILSTRCRRELRILICFTSKNRNSVDKNSVFCTKNNSSQLLDKRKDLDKDKKELIKLKFFLWPNYRLEDLACMNRYWFDTNNGSRFSMLRIYMYPRLKSH</sequence>
<comment type="function">
    <text evidence="1">Involved in protein precursor import into chloroplasts. May be part of an intermediate translocation complex acting as a protein-conducting channel at the inner envelope.</text>
</comment>
<comment type="subunit">
    <text evidence="1">Part of the Tic complex.</text>
</comment>
<comment type="subcellular location">
    <subcellularLocation>
        <location evidence="1">Plastid</location>
        <location evidence="1">Chloroplast inner membrane</location>
        <topology evidence="2">Multi-pass membrane protein</topology>
    </subcellularLocation>
</comment>
<comment type="similarity">
    <text evidence="4">Belongs to the TIC214 family.</text>
</comment>
<accession>A0A393</accession>
<gene>
    <name evidence="1" type="primary">TIC214</name>
    <name type="synonym">ycf1</name>
</gene>
<geneLocation type="chloroplast"/>
<name>TI214_COFAR</name>
<keyword id="KW-0150">Chloroplast</keyword>
<keyword id="KW-0472">Membrane</keyword>
<keyword id="KW-0934">Plastid</keyword>
<keyword id="KW-1001">Plastid inner membrane</keyword>
<keyword id="KW-0653">Protein transport</keyword>
<keyword id="KW-1185">Reference proteome</keyword>
<keyword id="KW-0812">Transmembrane</keyword>
<keyword id="KW-1133">Transmembrane helix</keyword>
<keyword id="KW-0813">Transport</keyword>
<dbReference type="EMBL" id="EF044213">
    <property type="protein sequence ID" value="ABJ89737.1"/>
    <property type="molecule type" value="Genomic_DNA"/>
</dbReference>
<dbReference type="RefSeq" id="YP_817540.1">
    <property type="nucleotide sequence ID" value="NC_008535.1"/>
</dbReference>
<dbReference type="GeneID" id="4421859"/>
<dbReference type="OrthoDB" id="1938219at2759"/>
<dbReference type="Proteomes" id="UP000515148">
    <property type="component" value="Chloroplast Pltd"/>
</dbReference>
<dbReference type="GO" id="GO:0009706">
    <property type="term" value="C:chloroplast inner membrane"/>
    <property type="evidence" value="ECO:0007669"/>
    <property type="project" value="UniProtKB-SubCell"/>
</dbReference>
<dbReference type="GO" id="GO:0015031">
    <property type="term" value="P:protein transport"/>
    <property type="evidence" value="ECO:0007669"/>
    <property type="project" value="UniProtKB-KW"/>
</dbReference>
<dbReference type="InterPro" id="IPR008896">
    <property type="entry name" value="TIC214"/>
</dbReference>
<dbReference type="PANTHER" id="PTHR33163:SF40">
    <property type="entry name" value="PROTEIN TIC 214"/>
    <property type="match status" value="1"/>
</dbReference>
<dbReference type="PANTHER" id="PTHR33163">
    <property type="entry name" value="PROTEIN TIC 214-RELATED"/>
    <property type="match status" value="1"/>
</dbReference>
<dbReference type="Pfam" id="PF05758">
    <property type="entry name" value="Ycf1"/>
    <property type="match status" value="1"/>
</dbReference>
<evidence type="ECO:0000250" key="1">
    <source>
        <dbReference type="UniProtKB" id="P56785"/>
    </source>
</evidence>
<evidence type="ECO:0000255" key="2"/>
<evidence type="ECO:0000256" key="3">
    <source>
        <dbReference type="SAM" id="MobiDB-lite"/>
    </source>
</evidence>
<evidence type="ECO:0000305" key="4"/>
<reference key="1">
    <citation type="journal article" date="2007" name="Plant Biotechnol. J.">
        <title>The complete nucleotide sequence of the coffee (Coffea arabica L.) chloroplast genome: organization and implications for biotechnology and phylogenetic relationships amongst angiosperms.</title>
        <authorList>
            <person name="Samson N."/>
            <person name="Bausher M.G."/>
            <person name="Lee S.-B."/>
            <person name="Jansen R.K."/>
            <person name="Daniell H."/>
        </authorList>
    </citation>
    <scope>NUCLEOTIDE SEQUENCE [LARGE SCALE GENOMIC DNA]</scope>
</reference>
<feature type="chain" id="PRO_0000326567" description="Protein TIC 214">
    <location>
        <begin position="1"/>
        <end position="1874"/>
    </location>
</feature>
<feature type="transmembrane region" description="Helical" evidence="2">
    <location>
        <begin position="18"/>
        <end position="38"/>
    </location>
</feature>
<feature type="transmembrane region" description="Helical" evidence="2">
    <location>
        <begin position="64"/>
        <end position="84"/>
    </location>
</feature>
<feature type="transmembrane region" description="Helical" evidence="2">
    <location>
        <begin position="87"/>
        <end position="107"/>
    </location>
</feature>
<feature type="transmembrane region" description="Helical" evidence="2">
    <location>
        <begin position="124"/>
        <end position="144"/>
    </location>
</feature>
<feature type="transmembrane region" description="Helical" evidence="2">
    <location>
        <begin position="172"/>
        <end position="192"/>
    </location>
</feature>
<feature type="transmembrane region" description="Helical" evidence="2">
    <location>
        <begin position="221"/>
        <end position="241"/>
    </location>
</feature>
<feature type="region of interest" description="Disordered" evidence="3">
    <location>
        <begin position="248"/>
        <end position="310"/>
    </location>
</feature>
<feature type="region of interest" description="Disordered" evidence="3">
    <location>
        <begin position="1567"/>
        <end position="1624"/>
    </location>
</feature>
<feature type="compositionally biased region" description="Acidic residues" evidence="3">
    <location>
        <begin position="255"/>
        <end position="268"/>
    </location>
</feature>
<feature type="compositionally biased region" description="Basic and acidic residues" evidence="3">
    <location>
        <begin position="298"/>
        <end position="310"/>
    </location>
</feature>
<feature type="compositionally biased region" description="Basic and acidic residues" evidence="3">
    <location>
        <begin position="1584"/>
        <end position="1601"/>
    </location>
</feature>
<organism>
    <name type="scientific">Coffea arabica</name>
    <name type="common">Arabian coffee</name>
    <dbReference type="NCBI Taxonomy" id="13443"/>
    <lineage>
        <taxon>Eukaryota</taxon>
        <taxon>Viridiplantae</taxon>
        <taxon>Streptophyta</taxon>
        <taxon>Embryophyta</taxon>
        <taxon>Tracheophyta</taxon>
        <taxon>Spermatophyta</taxon>
        <taxon>Magnoliopsida</taxon>
        <taxon>eudicotyledons</taxon>
        <taxon>Gunneridae</taxon>
        <taxon>Pentapetalae</taxon>
        <taxon>asterids</taxon>
        <taxon>lamiids</taxon>
        <taxon>Gentianales</taxon>
        <taxon>Rubiaceae</taxon>
        <taxon>Ixoroideae</taxon>
        <taxon>Gardenieae complex</taxon>
        <taxon>Bertiereae - Coffeeae clade</taxon>
        <taxon>Coffeeae</taxon>
        <taxon>Coffea</taxon>
    </lineage>
</organism>
<proteinExistence type="inferred from homology"/>
<protein>
    <recommendedName>
        <fullName evidence="1">Protein TIC 214</fullName>
    </recommendedName>
    <alternativeName>
        <fullName evidence="1">Translocon at the inner envelope membrane of chloroplasts 214</fullName>
        <shortName evidence="1">AtTIC214</shortName>
    </alternativeName>
</protein>